<organism>
    <name type="scientific">Wolinella succinogenes (strain ATCC 29543 / DSM 1740 / CCUG 13145 / JCM 31913 / LMG 7466 / NCTC 11488 / FDC 602W)</name>
    <name type="common">Vibrio succinogenes</name>
    <dbReference type="NCBI Taxonomy" id="273121"/>
    <lineage>
        <taxon>Bacteria</taxon>
        <taxon>Pseudomonadati</taxon>
        <taxon>Campylobacterota</taxon>
        <taxon>Epsilonproteobacteria</taxon>
        <taxon>Campylobacterales</taxon>
        <taxon>Helicobacteraceae</taxon>
        <taxon>Wolinella</taxon>
    </lineage>
</organism>
<evidence type="ECO:0000255" key="1">
    <source>
        <dbReference type="HAMAP-Rule" id="MF_00022"/>
    </source>
</evidence>
<comment type="function">
    <text evidence="1">Catalyzes the attachment of glutamate to tRNA(Glu) in a two-step reaction: glutamate is first activated by ATP to form Glu-AMP and then transferred to the acceptor end of tRNA(Glu).</text>
</comment>
<comment type="catalytic activity">
    <reaction evidence="1">
        <text>tRNA(Glu) + L-glutamate + ATP = L-glutamyl-tRNA(Glu) + AMP + diphosphate</text>
        <dbReference type="Rhea" id="RHEA:23540"/>
        <dbReference type="Rhea" id="RHEA-COMP:9663"/>
        <dbReference type="Rhea" id="RHEA-COMP:9680"/>
        <dbReference type="ChEBI" id="CHEBI:29985"/>
        <dbReference type="ChEBI" id="CHEBI:30616"/>
        <dbReference type="ChEBI" id="CHEBI:33019"/>
        <dbReference type="ChEBI" id="CHEBI:78442"/>
        <dbReference type="ChEBI" id="CHEBI:78520"/>
        <dbReference type="ChEBI" id="CHEBI:456215"/>
        <dbReference type="EC" id="6.1.1.17"/>
    </reaction>
</comment>
<comment type="subunit">
    <text evidence="1">Monomer.</text>
</comment>
<comment type="subcellular location">
    <subcellularLocation>
        <location evidence="1">Cytoplasm</location>
    </subcellularLocation>
</comment>
<comment type="similarity">
    <text evidence="1">Belongs to the class-I aminoacyl-tRNA synthetase family. Glutamate--tRNA ligase type 1 subfamily.</text>
</comment>
<feature type="chain" id="PRO_0000119699" description="Glutamate--tRNA ligase 1">
    <location>
        <begin position="1"/>
        <end position="465"/>
    </location>
</feature>
<feature type="short sequence motif" description="'HIGH' region" evidence="1">
    <location>
        <begin position="8"/>
        <end position="18"/>
    </location>
</feature>
<feature type="short sequence motif" description="'KMSKS' region" evidence="1">
    <location>
        <begin position="236"/>
        <end position="240"/>
    </location>
</feature>
<feature type="binding site" evidence="1">
    <location>
        <position position="239"/>
    </location>
    <ligand>
        <name>ATP</name>
        <dbReference type="ChEBI" id="CHEBI:30616"/>
    </ligand>
</feature>
<accession>Q7M7L9</accession>
<keyword id="KW-0030">Aminoacyl-tRNA synthetase</keyword>
<keyword id="KW-0067">ATP-binding</keyword>
<keyword id="KW-0963">Cytoplasm</keyword>
<keyword id="KW-0436">Ligase</keyword>
<keyword id="KW-0547">Nucleotide-binding</keyword>
<keyword id="KW-0648">Protein biosynthesis</keyword>
<keyword id="KW-1185">Reference proteome</keyword>
<reference key="1">
    <citation type="journal article" date="2003" name="Proc. Natl. Acad. Sci. U.S.A.">
        <title>Complete genome sequence and analysis of Wolinella succinogenes.</title>
        <authorList>
            <person name="Baar C."/>
            <person name="Eppinger M."/>
            <person name="Raddatz G."/>
            <person name="Simon J."/>
            <person name="Lanz C."/>
            <person name="Klimmek O."/>
            <person name="Nandakumar R."/>
            <person name="Gross R."/>
            <person name="Rosinus A."/>
            <person name="Keller H."/>
            <person name="Jagtap P."/>
            <person name="Linke B."/>
            <person name="Meyer F."/>
            <person name="Lederer H."/>
            <person name="Schuster S.C."/>
        </authorList>
    </citation>
    <scope>NUCLEOTIDE SEQUENCE [LARGE SCALE GENOMIC DNA]</scope>
    <source>
        <strain>ATCC 29543 / DSM 1740 / CCUG 13145 / JCM 31913 / LMG 7466 / NCTC 11488 / FDC 602W</strain>
    </source>
</reference>
<name>SYE1_WOLSU</name>
<sequence length="465" mass="52651">MIVTRFAPSPTGNLHIGGLRTALFSYLYARKTGGKFLLRIEDTDLARNSHDATKAIIEAFDWVGLSYDGEAIYQSERFPLYKEYIDRLIQEGKAYYCYMSKEELDALREEQRSRGETPRYDNRYRDFTGTPPSGVAPVVRIKAPLEGYIEFEDGVKGEMKIGAKEMDDYIIARSDGTPTYNFVVSIDDALMGVTDVIRGDDHLTNTPKQIIVYQALGFPIPKFYHVPMILNPEGRKLSKRDGAMGVMDYKRAGYLPEAVLNFLVRLGWSHGDQEIFSMEEMLRFFDPKDLNSSASAYNQEKFLWLNHHYITQTPNERLEELLLEFGCQPLSLGVREILYPALKERAKTLAELAQMLQEIVQTPSELDTKMLEKVGNSENGEILENYALFLESLESAGENPKILEEETQAFLDIHGLKSGKLFQSVRLALLGKGGGPGIFEIMAAIGKEESMARIQKASEIFKNRN</sequence>
<gene>
    <name evidence="1" type="primary">gltX1</name>
    <name type="ordered locus">WS2217</name>
</gene>
<protein>
    <recommendedName>
        <fullName evidence="1">Glutamate--tRNA ligase 1</fullName>
        <ecNumber evidence="1">6.1.1.17</ecNumber>
    </recommendedName>
    <alternativeName>
        <fullName evidence="1">Glutamyl-tRNA synthetase 1</fullName>
        <shortName evidence="1">GluRS 1</shortName>
    </alternativeName>
</protein>
<dbReference type="EC" id="6.1.1.17" evidence="1"/>
<dbReference type="EMBL" id="BX571663">
    <property type="protein sequence ID" value="CAE11205.1"/>
    <property type="molecule type" value="Genomic_DNA"/>
</dbReference>
<dbReference type="RefSeq" id="WP_011139987.1">
    <property type="nucleotide sequence ID" value="NC_005090.1"/>
</dbReference>
<dbReference type="SMR" id="Q7M7L9"/>
<dbReference type="STRING" id="273121.WS2217"/>
<dbReference type="KEGG" id="wsu:WS2217"/>
<dbReference type="eggNOG" id="COG0008">
    <property type="taxonomic scope" value="Bacteria"/>
</dbReference>
<dbReference type="eggNOG" id="COG1384">
    <property type="taxonomic scope" value="Bacteria"/>
</dbReference>
<dbReference type="HOGENOM" id="CLU_015768_6_0_7"/>
<dbReference type="Proteomes" id="UP000000422">
    <property type="component" value="Chromosome"/>
</dbReference>
<dbReference type="GO" id="GO:0005829">
    <property type="term" value="C:cytosol"/>
    <property type="evidence" value="ECO:0007669"/>
    <property type="project" value="TreeGrafter"/>
</dbReference>
<dbReference type="GO" id="GO:0005524">
    <property type="term" value="F:ATP binding"/>
    <property type="evidence" value="ECO:0007669"/>
    <property type="project" value="UniProtKB-UniRule"/>
</dbReference>
<dbReference type="GO" id="GO:0004818">
    <property type="term" value="F:glutamate-tRNA ligase activity"/>
    <property type="evidence" value="ECO:0007669"/>
    <property type="project" value="UniProtKB-UniRule"/>
</dbReference>
<dbReference type="GO" id="GO:0000049">
    <property type="term" value="F:tRNA binding"/>
    <property type="evidence" value="ECO:0007669"/>
    <property type="project" value="InterPro"/>
</dbReference>
<dbReference type="GO" id="GO:0008270">
    <property type="term" value="F:zinc ion binding"/>
    <property type="evidence" value="ECO:0007669"/>
    <property type="project" value="InterPro"/>
</dbReference>
<dbReference type="GO" id="GO:0006424">
    <property type="term" value="P:glutamyl-tRNA aminoacylation"/>
    <property type="evidence" value="ECO:0007669"/>
    <property type="project" value="UniProtKB-UniRule"/>
</dbReference>
<dbReference type="CDD" id="cd00808">
    <property type="entry name" value="GluRS_core"/>
    <property type="match status" value="1"/>
</dbReference>
<dbReference type="FunFam" id="3.40.50.620:FF:000007">
    <property type="entry name" value="Glutamate--tRNA ligase"/>
    <property type="match status" value="1"/>
</dbReference>
<dbReference type="Gene3D" id="1.10.10.350">
    <property type="match status" value="1"/>
</dbReference>
<dbReference type="Gene3D" id="3.40.50.620">
    <property type="entry name" value="HUPs"/>
    <property type="match status" value="1"/>
</dbReference>
<dbReference type="HAMAP" id="MF_00022">
    <property type="entry name" value="Glu_tRNA_synth_type1"/>
    <property type="match status" value="1"/>
</dbReference>
<dbReference type="InterPro" id="IPR045462">
    <property type="entry name" value="aa-tRNA-synth_I_cd-bd"/>
</dbReference>
<dbReference type="InterPro" id="IPR020751">
    <property type="entry name" value="aa-tRNA-synth_I_codon-bd_sub2"/>
</dbReference>
<dbReference type="InterPro" id="IPR001412">
    <property type="entry name" value="aa-tRNA-synth_I_CS"/>
</dbReference>
<dbReference type="InterPro" id="IPR008925">
    <property type="entry name" value="aa_tRNA-synth_I_cd-bd_sf"/>
</dbReference>
<dbReference type="InterPro" id="IPR004527">
    <property type="entry name" value="Glu-tRNA-ligase_bac/mito"/>
</dbReference>
<dbReference type="InterPro" id="IPR000924">
    <property type="entry name" value="Glu/Gln-tRNA-synth"/>
</dbReference>
<dbReference type="InterPro" id="IPR020058">
    <property type="entry name" value="Glu/Gln-tRNA-synth_Ib_cat-dom"/>
</dbReference>
<dbReference type="InterPro" id="IPR049940">
    <property type="entry name" value="GluQ/Sye"/>
</dbReference>
<dbReference type="InterPro" id="IPR033910">
    <property type="entry name" value="GluRS_core"/>
</dbReference>
<dbReference type="InterPro" id="IPR014729">
    <property type="entry name" value="Rossmann-like_a/b/a_fold"/>
</dbReference>
<dbReference type="NCBIfam" id="TIGR00464">
    <property type="entry name" value="gltX_bact"/>
    <property type="match status" value="1"/>
</dbReference>
<dbReference type="PANTHER" id="PTHR43311">
    <property type="entry name" value="GLUTAMATE--TRNA LIGASE"/>
    <property type="match status" value="1"/>
</dbReference>
<dbReference type="PANTHER" id="PTHR43311:SF2">
    <property type="entry name" value="GLUTAMATE--TRNA LIGASE, MITOCHONDRIAL-RELATED"/>
    <property type="match status" value="1"/>
</dbReference>
<dbReference type="Pfam" id="PF19269">
    <property type="entry name" value="Anticodon_2"/>
    <property type="match status" value="1"/>
</dbReference>
<dbReference type="Pfam" id="PF00749">
    <property type="entry name" value="tRNA-synt_1c"/>
    <property type="match status" value="1"/>
</dbReference>
<dbReference type="PRINTS" id="PR00987">
    <property type="entry name" value="TRNASYNTHGLU"/>
</dbReference>
<dbReference type="SUPFAM" id="SSF48163">
    <property type="entry name" value="An anticodon-binding domain of class I aminoacyl-tRNA synthetases"/>
    <property type="match status" value="1"/>
</dbReference>
<dbReference type="SUPFAM" id="SSF52374">
    <property type="entry name" value="Nucleotidylyl transferase"/>
    <property type="match status" value="1"/>
</dbReference>
<dbReference type="PROSITE" id="PS00178">
    <property type="entry name" value="AA_TRNA_LIGASE_I"/>
    <property type="match status" value="1"/>
</dbReference>
<proteinExistence type="inferred from homology"/>